<evidence type="ECO:0000250" key="1"/>
<evidence type="ECO:0000250" key="2">
    <source>
        <dbReference type="UniProtKB" id="Q99216"/>
    </source>
</evidence>
<evidence type="ECO:0000256" key="3">
    <source>
        <dbReference type="SAM" id="MobiDB-lite"/>
    </source>
</evidence>
<evidence type="ECO:0000305" key="4"/>
<sequence length="252" mass="27812">MPAPTALLRKSDEPLSAEEPSLTFSSDAQASGQGEAPSPIPTESAQHSDMRIDEESRPVFTPITDAGTVLRVETRKVPVPPHRMTPLKANWPKIYPPLVEHLKLQVRMNIKNRAVELRTSKFTTDTGALQKGEDFVKAFTLGFDVDDAIALLRLDDLYIRSFEIRDVKASLNGEHLSRAIGRIAGKDGKTKFAIENASRTRVVLQGTKVTILGRFRDLGIAQEAIVSLILGSPPGKVYGNLRKVASRMKERF</sequence>
<name>PNO1_ASPFU</name>
<organism>
    <name type="scientific">Aspergillus fumigatus (strain ATCC MYA-4609 / CBS 101355 / FGSC A1100 / Af293)</name>
    <name type="common">Neosartorya fumigata</name>
    <dbReference type="NCBI Taxonomy" id="330879"/>
    <lineage>
        <taxon>Eukaryota</taxon>
        <taxon>Fungi</taxon>
        <taxon>Dikarya</taxon>
        <taxon>Ascomycota</taxon>
        <taxon>Pezizomycotina</taxon>
        <taxon>Eurotiomycetes</taxon>
        <taxon>Eurotiomycetidae</taxon>
        <taxon>Eurotiales</taxon>
        <taxon>Aspergillaceae</taxon>
        <taxon>Aspergillus</taxon>
        <taxon>Aspergillus subgen. Fumigati</taxon>
    </lineage>
</organism>
<protein>
    <recommendedName>
        <fullName>Pre-rRNA-processing protein pno1</fullName>
    </recommendedName>
</protein>
<gene>
    <name type="primary">pno1</name>
    <name type="ORF">AFUA_6G06430</name>
</gene>
<dbReference type="EMBL" id="AAHF01000006">
    <property type="protein sequence ID" value="EAL88497.1"/>
    <property type="molecule type" value="Genomic_DNA"/>
</dbReference>
<dbReference type="RefSeq" id="XP_750535.1">
    <property type="nucleotide sequence ID" value="XM_745442.1"/>
</dbReference>
<dbReference type="SMR" id="Q4WNG7"/>
<dbReference type="FunCoup" id="Q4WNG7">
    <property type="interactions" value="902"/>
</dbReference>
<dbReference type="STRING" id="330879.Q4WNG7"/>
<dbReference type="EnsemblFungi" id="EAL88497">
    <property type="protein sequence ID" value="EAL88497"/>
    <property type="gene ID" value="AFUA_6G06430"/>
</dbReference>
<dbReference type="GeneID" id="3508140"/>
<dbReference type="KEGG" id="afm:AFUA_6G06430"/>
<dbReference type="eggNOG" id="KOG3273">
    <property type="taxonomic scope" value="Eukaryota"/>
</dbReference>
<dbReference type="HOGENOM" id="CLU_064992_0_2_1"/>
<dbReference type="InParanoid" id="Q4WNG7"/>
<dbReference type="OMA" id="TPLRNNW"/>
<dbReference type="OrthoDB" id="1932641at2759"/>
<dbReference type="Proteomes" id="UP000002530">
    <property type="component" value="Chromosome 6"/>
</dbReference>
<dbReference type="GO" id="GO:0005737">
    <property type="term" value="C:cytoplasm"/>
    <property type="evidence" value="ECO:0007669"/>
    <property type="project" value="UniProtKB-SubCell"/>
</dbReference>
<dbReference type="GO" id="GO:0005730">
    <property type="term" value="C:nucleolus"/>
    <property type="evidence" value="ECO:0007669"/>
    <property type="project" value="UniProtKB-SubCell"/>
</dbReference>
<dbReference type="GO" id="GO:0005634">
    <property type="term" value="C:nucleus"/>
    <property type="evidence" value="ECO:0000318"/>
    <property type="project" value="GO_Central"/>
</dbReference>
<dbReference type="GO" id="GO:0042134">
    <property type="term" value="F:rRNA primary transcript binding"/>
    <property type="evidence" value="ECO:0007669"/>
    <property type="project" value="EnsemblFungi"/>
</dbReference>
<dbReference type="GO" id="GO:0051082">
    <property type="term" value="F:unfolded protein binding"/>
    <property type="evidence" value="ECO:0007669"/>
    <property type="project" value="EnsemblFungi"/>
</dbReference>
<dbReference type="GO" id="GO:0000447">
    <property type="term" value="P:endonucleolytic cleavage in ITS1 to separate SSU-rRNA from 5.8S rRNA and LSU-rRNA from tricistronic rRNA transcript (SSU-rRNA, 5.8S rRNA, LSU-rRNA)"/>
    <property type="evidence" value="ECO:0007669"/>
    <property type="project" value="EnsemblFungi"/>
</dbReference>
<dbReference type="GO" id="GO:0000472">
    <property type="term" value="P:endonucleolytic cleavage to generate mature 5'-end of SSU-rRNA from (SSU-rRNA, 5.8S rRNA, LSU-rRNA)"/>
    <property type="evidence" value="ECO:0007669"/>
    <property type="project" value="EnsemblFungi"/>
</dbReference>
<dbReference type="GO" id="GO:0043248">
    <property type="term" value="P:proteasome assembly"/>
    <property type="evidence" value="ECO:0007669"/>
    <property type="project" value="EnsemblFungi"/>
</dbReference>
<dbReference type="GO" id="GO:0000056">
    <property type="term" value="P:ribosomal small subunit export from nucleus"/>
    <property type="evidence" value="ECO:0007669"/>
    <property type="project" value="EnsemblFungi"/>
</dbReference>
<dbReference type="GO" id="GO:0042255">
    <property type="term" value="P:ribosome assembly"/>
    <property type="evidence" value="ECO:0007669"/>
    <property type="project" value="EnsemblFungi"/>
</dbReference>
<dbReference type="CDD" id="cd22391">
    <property type="entry name" value="KH-I_PNO1_rpt1"/>
    <property type="match status" value="1"/>
</dbReference>
<dbReference type="CDD" id="cd22392">
    <property type="entry name" value="KH-I_PNO1_rpt2"/>
    <property type="match status" value="1"/>
</dbReference>
<dbReference type="FunFam" id="3.30.1370.10:FF:000009">
    <property type="entry name" value="RNA-binding protein PNO1"/>
    <property type="match status" value="1"/>
</dbReference>
<dbReference type="FunFam" id="3.30.1370.10:FF:000048">
    <property type="entry name" value="RNA-binding protein PNO1 isoform X2"/>
    <property type="match status" value="1"/>
</dbReference>
<dbReference type="Gene3D" id="3.30.1370.10">
    <property type="entry name" value="K Homology domain, type 1"/>
    <property type="match status" value="1"/>
</dbReference>
<dbReference type="InterPro" id="IPR055212">
    <property type="entry name" value="KH-I_PNO1_first"/>
</dbReference>
<dbReference type="InterPro" id="IPR036612">
    <property type="entry name" value="KH_dom_type_1_sf"/>
</dbReference>
<dbReference type="InterPro" id="IPR055211">
    <property type="entry name" value="KH_PNO1_2nd"/>
</dbReference>
<dbReference type="PANTHER" id="PTHR12826">
    <property type="entry name" value="RIBONUCLEASE Y"/>
    <property type="match status" value="1"/>
</dbReference>
<dbReference type="PANTHER" id="PTHR12826:SF13">
    <property type="entry name" value="RNA-BINDING PROTEIN PNO1"/>
    <property type="match status" value="1"/>
</dbReference>
<dbReference type="Pfam" id="PF22891">
    <property type="entry name" value="KH_PNO1_2nd"/>
    <property type="match status" value="1"/>
</dbReference>
<dbReference type="SUPFAM" id="SSF54791">
    <property type="entry name" value="Eukaryotic type KH-domain (KH-domain type I)"/>
    <property type="match status" value="1"/>
</dbReference>
<feature type="chain" id="PRO_0000278363" description="Pre-rRNA-processing protein pno1">
    <location>
        <begin position="1"/>
        <end position="252"/>
    </location>
</feature>
<feature type="domain" description="KH">
    <location>
        <begin position="173"/>
        <end position="225"/>
    </location>
</feature>
<feature type="region of interest" description="Disordered" evidence="3">
    <location>
        <begin position="1"/>
        <end position="57"/>
    </location>
</feature>
<feature type="compositionally biased region" description="Polar residues" evidence="3">
    <location>
        <begin position="22"/>
        <end position="32"/>
    </location>
</feature>
<feature type="compositionally biased region" description="Basic and acidic residues" evidence="3">
    <location>
        <begin position="46"/>
        <end position="57"/>
    </location>
</feature>
<keyword id="KW-0963">Cytoplasm</keyword>
<keyword id="KW-0539">Nucleus</keyword>
<keyword id="KW-1185">Reference proteome</keyword>
<keyword id="KW-0690">Ribosome biogenesis</keyword>
<keyword id="KW-0694">RNA-binding</keyword>
<comment type="function">
    <text evidence="1">Required for small ribosomal subunit (SSU) synthesis. Has a role in the processing of early nucleolar and late cytoplasmic pre-RNA species (By similarity).</text>
</comment>
<comment type="subunit">
    <text evidence="1">Component of the small ribosomal subunit, ribosomal RNA processing complex (SSU RRP complex).</text>
</comment>
<comment type="subcellular location">
    <subcellularLocation>
        <location evidence="2">Cytoplasm</location>
    </subcellularLocation>
    <subcellularLocation>
        <location evidence="2">Nucleus</location>
        <location evidence="2">Nucleolus</location>
    </subcellularLocation>
</comment>
<comment type="similarity">
    <text evidence="4">Belongs to the PNO1 family.</text>
</comment>
<accession>Q4WNG7</accession>
<proteinExistence type="inferred from homology"/>
<reference key="1">
    <citation type="journal article" date="2005" name="Nature">
        <title>Genomic sequence of the pathogenic and allergenic filamentous fungus Aspergillus fumigatus.</title>
        <authorList>
            <person name="Nierman W.C."/>
            <person name="Pain A."/>
            <person name="Anderson M.J."/>
            <person name="Wortman J.R."/>
            <person name="Kim H.S."/>
            <person name="Arroyo J."/>
            <person name="Berriman M."/>
            <person name="Abe K."/>
            <person name="Archer D.B."/>
            <person name="Bermejo C."/>
            <person name="Bennett J.W."/>
            <person name="Bowyer P."/>
            <person name="Chen D."/>
            <person name="Collins M."/>
            <person name="Coulsen R."/>
            <person name="Davies R."/>
            <person name="Dyer P.S."/>
            <person name="Farman M.L."/>
            <person name="Fedorova N."/>
            <person name="Fedorova N.D."/>
            <person name="Feldblyum T.V."/>
            <person name="Fischer R."/>
            <person name="Fosker N."/>
            <person name="Fraser A."/>
            <person name="Garcia J.L."/>
            <person name="Garcia M.J."/>
            <person name="Goble A."/>
            <person name="Goldman G.H."/>
            <person name="Gomi K."/>
            <person name="Griffith-Jones S."/>
            <person name="Gwilliam R."/>
            <person name="Haas B.J."/>
            <person name="Haas H."/>
            <person name="Harris D.E."/>
            <person name="Horiuchi H."/>
            <person name="Huang J."/>
            <person name="Humphray S."/>
            <person name="Jimenez J."/>
            <person name="Keller N."/>
            <person name="Khouri H."/>
            <person name="Kitamoto K."/>
            <person name="Kobayashi T."/>
            <person name="Konzack S."/>
            <person name="Kulkarni R."/>
            <person name="Kumagai T."/>
            <person name="Lafton A."/>
            <person name="Latge J.-P."/>
            <person name="Li W."/>
            <person name="Lord A."/>
            <person name="Lu C."/>
            <person name="Majoros W.H."/>
            <person name="May G.S."/>
            <person name="Miller B.L."/>
            <person name="Mohamoud Y."/>
            <person name="Molina M."/>
            <person name="Monod M."/>
            <person name="Mouyna I."/>
            <person name="Mulligan S."/>
            <person name="Murphy L.D."/>
            <person name="O'Neil S."/>
            <person name="Paulsen I."/>
            <person name="Penalva M.A."/>
            <person name="Pertea M."/>
            <person name="Price C."/>
            <person name="Pritchard B.L."/>
            <person name="Quail M.A."/>
            <person name="Rabbinowitsch E."/>
            <person name="Rawlins N."/>
            <person name="Rajandream M.A."/>
            <person name="Reichard U."/>
            <person name="Renauld H."/>
            <person name="Robson G.D."/>
            <person name="Rodriguez de Cordoba S."/>
            <person name="Rodriguez-Pena J.M."/>
            <person name="Ronning C.M."/>
            <person name="Rutter S."/>
            <person name="Salzberg S.L."/>
            <person name="Sanchez M."/>
            <person name="Sanchez-Ferrero J.C."/>
            <person name="Saunders D."/>
            <person name="Seeger K."/>
            <person name="Squares R."/>
            <person name="Squares S."/>
            <person name="Takeuchi M."/>
            <person name="Tekaia F."/>
            <person name="Turner G."/>
            <person name="Vazquez de Aldana C.R."/>
            <person name="Weidman J."/>
            <person name="White O."/>
            <person name="Woodward J.R."/>
            <person name="Yu J.-H."/>
            <person name="Fraser C.M."/>
            <person name="Galagan J.E."/>
            <person name="Asai K."/>
            <person name="Machida M."/>
            <person name="Hall N."/>
            <person name="Barrell B.G."/>
            <person name="Denning D.W."/>
        </authorList>
    </citation>
    <scope>NUCLEOTIDE SEQUENCE [LARGE SCALE GENOMIC DNA]</scope>
    <source>
        <strain>ATCC MYA-4609 / CBS 101355 / FGSC A1100 / Af293</strain>
    </source>
</reference>